<comment type="function">
    <text evidence="9 10">Modulator of T-cell signaling. Can be either a costimulator of T-cell function, or a coinhibitor, depending on the receptor it binds to. Upon binding to CD226, stimulates T-cell proliferation and cytokine production, including that of IL2, IL5, IL10, IL13, and IFNG. Upon interaction with PVRIG, inhibits T-cell proliferation. These interactions are competitive (PubMed:26755705). Probable cell adhesion protein (PubMed:9657005).</text>
</comment>
<comment type="function">
    <text evidence="5 10">(Microbial infection) Acts as a receptor for herpes simplex virus 1 (HHV-1) mutant Rid1, herpes simplex virus 1 (HHV-2) and pseudorabies virus (PRV).</text>
</comment>
<comment type="subunit">
    <text evidence="1 6 7 8">Can form trans-heterodimers with NECTIN3 (By similarity). Interacts with CD226 or with PVRIG; these interactions are competitive and have a differential functional outcome on T-cell activation, either positive or negative, respectively. Binds with low affinity to TIGIT.</text>
</comment>
<comment type="subunit">
    <text evidence="5 10">(Microbial infection) Interacts with herpes simplex virus 1 (HHV-1) mutant Rid1, herpes simplex virus 1 (HHV-2) and pseudorabies virus (PRV) envelope glycoprotein D (PubMed:11602758, PubMed:9657005).</text>
</comment>
<comment type="interaction">
    <interactant intactId="EBI-718419">
        <id>Q92692</id>
    </interactant>
    <interactant intactId="EBI-365875">
        <id>P55196</id>
        <label>AFDN</label>
    </interactant>
    <organismsDiffer>false</organismsDiffer>
    <experiments>2</experiments>
</comment>
<comment type="interaction">
    <interactant intactId="EBI-718419">
        <id>Q92692</id>
    </interactant>
    <interactant intactId="EBI-4314442">
        <id>Q15762</id>
        <label>CD226</label>
    </interactant>
    <organismsDiffer>false</organismsDiffer>
    <experiments>2</experiments>
</comment>
<comment type="interaction">
    <interactant intactId="EBI-718419">
        <id>Q92692</id>
    </interactant>
    <interactant intactId="EBI-10172150">
        <id>P60370</id>
        <label>KRTAP10-5</label>
    </interactant>
    <organismsDiffer>false</organismsDiffer>
    <experiments>3</experiments>
</comment>
<comment type="interaction">
    <interactant intactId="EBI-718419">
        <id>Q92692</id>
    </interactant>
    <interactant intactId="EBI-10172290">
        <id>P60409</id>
        <label>KRTAP10-7</label>
    </interactant>
    <organismsDiffer>false</organismsDiffer>
    <experiments>3</experiments>
</comment>
<comment type="interaction">
    <interactant intactId="EBI-718419">
        <id>Q92692</id>
    </interactant>
    <interactant intactId="EBI-3958099">
        <id>P26371</id>
        <label>KRTAP5-9</label>
    </interactant>
    <organismsDiffer>false</organismsDiffer>
    <experiments>3</experiments>
</comment>
<comment type="interaction">
    <interactant intactId="EBI-718419">
        <id>Q92692</id>
    </interactant>
    <interactant intactId="EBI-724076">
        <id>Q99750</id>
        <label>MDFI</label>
    </interactant>
    <organismsDiffer>false</organismsDiffer>
    <experiments>4</experiments>
</comment>
<comment type="interaction">
    <interactant intactId="EBI-718419">
        <id>Q92692</id>
    </interactant>
    <interactant intactId="EBI-718419">
        <id>Q92692</id>
        <label>NECTIN2</label>
    </interactant>
    <organismsDiffer>false</organismsDiffer>
    <experiments>8</experiments>
</comment>
<comment type="interaction">
    <interactant intactId="EBI-718419">
        <id>Q92692</id>
    </interactant>
    <interactant intactId="EBI-2826725">
        <id>Q9NQS3</id>
        <label>NECTIN3</label>
    </interactant>
    <organismsDiffer>false</organismsDiffer>
    <experiments>4</experiments>
</comment>
<comment type="interaction">
    <interactant intactId="EBI-718419">
        <id>Q92692</id>
    </interactant>
    <interactant intactId="EBI-16007706">
        <id>Q9NQS3-1</id>
        <label>NECTIN3</label>
    </interactant>
    <organismsDiffer>false</organismsDiffer>
    <experiments>2</experiments>
</comment>
<comment type="interaction">
    <interactant intactId="EBI-718419">
        <id>Q92692</id>
    </interactant>
    <interactant intactId="EBI-945833">
        <id>Q7Z3S9</id>
        <label>NOTCH2NLA</label>
    </interactant>
    <organismsDiffer>false</organismsDiffer>
    <experiments>3</experiments>
</comment>
<comment type="interaction">
    <interactant intactId="EBI-718419">
        <id>Q92692</id>
    </interactant>
    <interactant intactId="EBI-747107">
        <id>Q8IUQ4</id>
        <label>SIAH1</label>
    </interactant>
    <organismsDiffer>false</organismsDiffer>
    <experiments>3</experiments>
</comment>
<comment type="interaction">
    <interactant intactId="EBI-718419">
        <id>Q92692</id>
    </interactant>
    <interactant intactId="EBI-4314807">
        <id>Q495A1</id>
        <label>TIGIT</label>
    </interactant>
    <organismsDiffer>false</organismsDiffer>
    <experiments>6</experiments>
</comment>
<comment type="interaction">
    <interactant intactId="EBI-6979889">
        <id>Q92692-2</id>
    </interactant>
    <interactant intactId="EBI-3867333">
        <id>A8MQ03</id>
        <label>CYSRT1</label>
    </interactant>
    <organismsDiffer>false</organismsDiffer>
    <experiments>3</experiments>
</comment>
<comment type="interaction">
    <interactant intactId="EBI-6979889">
        <id>Q92692-2</id>
    </interactant>
    <interactant intactId="EBI-740785">
        <id>P49639</id>
        <label>HOXA1</label>
    </interactant>
    <organismsDiffer>false</organismsDiffer>
    <experiments>3</experiments>
</comment>
<comment type="interaction">
    <interactant intactId="EBI-6979889">
        <id>Q92692-2</id>
    </interactant>
    <interactant intactId="EBI-11959885">
        <id>Q07627</id>
        <label>KRTAP1-1</label>
    </interactant>
    <organismsDiffer>false</organismsDiffer>
    <experiments>3</experiments>
</comment>
<comment type="interaction">
    <interactant intactId="EBI-6979889">
        <id>Q92692-2</id>
    </interactant>
    <interactant intactId="EBI-11749135">
        <id>Q8IUG1</id>
        <label>KRTAP1-3</label>
    </interactant>
    <organismsDiffer>false</organismsDiffer>
    <experiments>3</experiments>
</comment>
<comment type="interaction">
    <interactant intactId="EBI-6979889">
        <id>Q92692-2</id>
    </interactant>
    <interactant intactId="EBI-10171774">
        <id>P60410</id>
        <label>KRTAP10-8</label>
    </interactant>
    <organismsDiffer>false</organismsDiffer>
    <experiments>3</experiments>
</comment>
<comment type="interaction">
    <interactant intactId="EBI-6979889">
        <id>Q92692-2</id>
    </interactant>
    <interactant intactId="EBI-10176379">
        <id>P59991</id>
        <label>KRTAP12-2</label>
    </interactant>
    <organismsDiffer>false</organismsDiffer>
    <experiments>3</experiments>
</comment>
<comment type="interaction">
    <interactant intactId="EBI-6979889">
        <id>Q92692-2</id>
    </interactant>
    <interactant intactId="EBI-12224199">
        <id>Q5T751</id>
        <label>LCE1C</label>
    </interactant>
    <organismsDiffer>false</organismsDiffer>
    <experiments>3</experiments>
</comment>
<comment type="interaction">
    <interactant intactId="EBI-6979889">
        <id>Q92692-2</id>
    </interactant>
    <interactant intactId="EBI-11478468">
        <id>O14633</id>
        <label>LCE2B</label>
    </interactant>
    <organismsDiffer>false</organismsDiffer>
    <experiments>3</experiments>
</comment>
<comment type="interaction">
    <interactant intactId="EBI-6979889">
        <id>Q92692-2</id>
    </interactant>
    <interactant intactId="EBI-11973993">
        <id>Q5TA81</id>
        <label>LCE2C</label>
    </interactant>
    <organismsDiffer>false</organismsDiffer>
    <experiments>3</experiments>
</comment>
<comment type="interaction">
    <interactant intactId="EBI-6979889">
        <id>Q92692-2</id>
    </interactant>
    <interactant intactId="EBI-11955689">
        <id>Q5TCM9</id>
        <label>LCE5A</label>
    </interactant>
    <organismsDiffer>false</organismsDiffer>
    <experiments>3</experiments>
</comment>
<comment type="interaction">
    <interactant intactId="EBI-6979889">
        <id>Q92692-2</id>
    </interactant>
    <interactant intactId="EBI-724076">
        <id>Q99750</id>
        <label>MDFI</label>
    </interactant>
    <organismsDiffer>false</organismsDiffer>
    <experiments>3</experiments>
</comment>
<comment type="interaction">
    <interactant intactId="EBI-6979889">
        <id>Q92692-2</id>
    </interactant>
    <interactant intactId="EBI-16439278">
        <id>Q6FHY5</id>
        <label>MEOX2</label>
    </interactant>
    <organismsDiffer>false</organismsDiffer>
    <experiments>3</experiments>
</comment>
<comment type="interaction">
    <interactant intactId="EBI-6979889">
        <id>Q92692-2</id>
    </interactant>
    <interactant intactId="EBI-22310682">
        <id>P0DPK4</id>
        <label>NOTCH2NLC</label>
    </interactant>
    <organismsDiffer>false</organismsDiffer>
    <experiments>3</experiments>
</comment>
<comment type="interaction">
    <interactant intactId="EBI-6979889">
        <id>Q92692-2</id>
    </interactant>
    <interactant intactId="EBI-13644623">
        <id>Q92570</id>
        <label>NR4A3</label>
    </interactant>
    <organismsDiffer>false</organismsDiffer>
    <experiments>3</experiments>
</comment>
<comment type="interaction">
    <interactant intactId="EBI-6979889">
        <id>Q92692-2</id>
    </interactant>
    <interactant intactId="EBI-395883">
        <id>P07237</id>
        <label>P4HB</label>
    </interactant>
    <organismsDiffer>false</organismsDiffer>
    <experiments>3</experiments>
</comment>
<comment type="interaction">
    <interactant intactId="EBI-6979889">
        <id>Q92692-2</id>
    </interactant>
    <interactant intactId="EBI-10178530">
        <id>O76081-6</id>
        <label>RGS20</label>
    </interactant>
    <organismsDiffer>false</organismsDiffer>
    <experiments>3</experiments>
</comment>
<comment type="interaction">
    <interactant intactId="EBI-6979889">
        <id>Q92692-2</id>
    </interactant>
    <interactant intactId="EBI-13636688">
        <id>P15884-3</id>
        <label>TCF4</label>
    </interactant>
    <organismsDiffer>false</organismsDiffer>
    <experiments>3</experiments>
</comment>
<comment type="interaction">
    <interactant intactId="EBI-6979889">
        <id>Q92692-2</id>
    </interactant>
    <interactant intactId="EBI-2562368">
        <id>P22735</id>
        <label>TGM1</label>
    </interactant>
    <organismsDiffer>false</organismsDiffer>
    <experiments>3</experiments>
</comment>
<comment type="subcellular location">
    <subcellularLocation>
        <location>Cell membrane</location>
        <topology>Single-pass type I membrane protein</topology>
    </subcellularLocation>
</comment>
<comment type="alternative products">
    <event type="alternative splicing"/>
    <isoform>
        <id>Q92692-1</id>
        <name>Delta</name>
        <sequence type="displayed"/>
    </isoform>
    <isoform>
        <id>Q92692-2</id>
        <name>Alpha</name>
        <sequence type="described" ref="VSP_002628 VSP_002629"/>
    </isoform>
</comment>
<comment type="tissue specificity">
    <text>Ubiquitous.</text>
</comment>
<comment type="similarity">
    <text evidence="15">Belongs to the nectin family.</text>
</comment>
<sequence>MARAAALLPSRSPPTPLLWPLLLLLLLETGAQDVRVQVLPEVRGQLGGTVELPCHLLPPVPGLYISLVTWQRPDAPANHQNVAAFHPKMGPSFPSPKPGSERLSFVSAKQSTGQDTEAELQDATLALHGLTVEDEGNYTCEFATFPKGSVRGMTWLRVIAKPKNQAEAQKVTFSQDPTTVALCISKEGRPPARISWLSSLDWEAKETQVSGTLAGTVTVTSRFTLVPSGRADGVTVTCKVEHESFEEPALIPVTLSVRYPPEVSISGYDDNWYLGRTDATLSCDVRSNPEPTGYDWSTTSGTFPTSAVAQGSQLVIHAVDSLFNTTFVCTVTNAVGMGRAEQVIFVRETPNTAGAGATGGIIGGIIAAIIATAVAATGILICRQQRKEQTLQGAEEDEDLEGPPSYKPPTPKAKLEAQEMPSQLFTLGASEHSPLKTPYFDAGASCTEQEMPRYHELPTLEERSGPLHPGATSLGSPIPVPPGPPAVEDVSLDLEDEEGEEEEEYLDKINPIYDALSYSSPSDSYQGKGFVMSRAMYV</sequence>
<gene>
    <name evidence="16" type="primary">NECTIN2</name>
    <name type="synonym">HVEB</name>
    <name type="synonym">PRR2</name>
    <name type="synonym">PVRL2</name>
</gene>
<protein>
    <recommendedName>
        <fullName>Nectin-2</fullName>
    </recommendedName>
    <alternativeName>
        <fullName>Herpes virus entry mediator B</fullName>
        <shortName>Herpesvirus entry mediator B</shortName>
        <shortName>HveB</shortName>
    </alternativeName>
    <alternativeName>
        <fullName evidence="16">Nectin cell adhesion molecule 2</fullName>
    </alternativeName>
    <alternativeName>
        <fullName>Poliovirus receptor-related protein 2</fullName>
    </alternativeName>
    <cdAntigenName>CD112</cdAntigenName>
</protein>
<organism>
    <name type="scientific">Homo sapiens</name>
    <name type="common">Human</name>
    <dbReference type="NCBI Taxonomy" id="9606"/>
    <lineage>
        <taxon>Eukaryota</taxon>
        <taxon>Metazoa</taxon>
        <taxon>Chordata</taxon>
        <taxon>Craniata</taxon>
        <taxon>Vertebrata</taxon>
        <taxon>Euteleostomi</taxon>
        <taxon>Mammalia</taxon>
        <taxon>Eutheria</taxon>
        <taxon>Euarchontoglires</taxon>
        <taxon>Primates</taxon>
        <taxon>Haplorrhini</taxon>
        <taxon>Catarrhini</taxon>
        <taxon>Hominidae</taxon>
        <taxon>Homo</taxon>
    </lineage>
</organism>
<dbReference type="EMBL" id="X80038">
    <property type="protein sequence ID" value="CAA56342.1"/>
    <property type="molecule type" value="mRNA"/>
</dbReference>
<dbReference type="EMBL" id="AF058448">
    <property type="protein sequence ID" value="AAC23797.1"/>
    <property type="molecule type" value="mRNA"/>
</dbReference>
<dbReference type="EMBL" id="AK291330">
    <property type="protein sequence ID" value="BAF84019.1"/>
    <property type="molecule type" value="mRNA"/>
</dbReference>
<dbReference type="EMBL" id="CR456818">
    <property type="protein sequence ID" value="CAG33099.1"/>
    <property type="molecule type" value="mRNA"/>
</dbReference>
<dbReference type="EMBL" id="CH471126">
    <property type="protein sequence ID" value="EAW57298.1"/>
    <property type="molecule type" value="Genomic_DNA"/>
</dbReference>
<dbReference type="EMBL" id="BC003091">
    <property type="protein sequence ID" value="AAH03091.1"/>
    <property type="molecule type" value="mRNA"/>
</dbReference>
<dbReference type="EMBL" id="AF044968">
    <property type="protein sequence ID" value="AAC82348.1"/>
    <property type="molecule type" value="Genomic_DNA"/>
</dbReference>
<dbReference type="EMBL" id="AF044962">
    <property type="protein sequence ID" value="AAC82348.1"/>
    <property type="status" value="JOINED"/>
    <property type="molecule type" value="Genomic_DNA"/>
</dbReference>
<dbReference type="EMBL" id="AF044963">
    <property type="protein sequence ID" value="AAC82348.1"/>
    <property type="status" value="JOINED"/>
    <property type="molecule type" value="Genomic_DNA"/>
</dbReference>
<dbReference type="EMBL" id="AF044964">
    <property type="protein sequence ID" value="AAC82348.1"/>
    <property type="status" value="JOINED"/>
    <property type="molecule type" value="Genomic_DNA"/>
</dbReference>
<dbReference type="EMBL" id="AF044966">
    <property type="protein sequence ID" value="AAC82348.1"/>
    <property type="status" value="JOINED"/>
    <property type="molecule type" value="Genomic_DNA"/>
</dbReference>
<dbReference type="EMBL" id="AF044967">
    <property type="protein sequence ID" value="AAC82348.1"/>
    <property type="status" value="JOINED"/>
    <property type="molecule type" value="Genomic_DNA"/>
</dbReference>
<dbReference type="EMBL" id="AF050154">
    <property type="protein sequence ID" value="AAD02503.1"/>
    <property type="molecule type" value="Genomic_DNA"/>
</dbReference>
<dbReference type="CCDS" id="CCDS12645.1">
    <molecule id="Q92692-2"/>
</dbReference>
<dbReference type="CCDS" id="CCDS42576.1">
    <molecule id="Q92692-1"/>
</dbReference>
<dbReference type="PIR" id="I68093">
    <property type="entry name" value="I68093"/>
</dbReference>
<dbReference type="RefSeq" id="NP_001036189.1">
    <molecule id="Q92692-1"/>
    <property type="nucleotide sequence ID" value="NM_001042724.2"/>
</dbReference>
<dbReference type="RefSeq" id="NP_002847.1">
    <molecule id="Q92692-2"/>
    <property type="nucleotide sequence ID" value="NM_002856.3"/>
</dbReference>
<dbReference type="PDB" id="3R0N">
    <property type="method" value="X-ray"/>
    <property type="resolution" value="1.30 A"/>
    <property type="chains" value="A=32-158"/>
</dbReference>
<dbReference type="PDB" id="4DFH">
    <property type="method" value="X-ray"/>
    <property type="resolution" value="1.85 A"/>
    <property type="chains" value="A/B=32-158"/>
</dbReference>
<dbReference type="PDB" id="4DFI">
    <property type="method" value="X-ray"/>
    <property type="resolution" value="1.80 A"/>
    <property type="chains" value="A=32-158"/>
</dbReference>
<dbReference type="PDB" id="4HZA">
    <property type="method" value="X-ray"/>
    <property type="resolution" value="1.70 A"/>
    <property type="chains" value="A/B=32-158"/>
</dbReference>
<dbReference type="PDB" id="5V52">
    <property type="method" value="X-ray"/>
    <property type="resolution" value="3.10 A"/>
    <property type="chains" value="C/D=32-158"/>
</dbReference>
<dbReference type="PDB" id="8X6B">
    <property type="method" value="X-ray"/>
    <property type="resolution" value="2.00 A"/>
    <property type="chains" value="A=32-158"/>
</dbReference>
<dbReference type="PDBsum" id="3R0N"/>
<dbReference type="PDBsum" id="4DFH"/>
<dbReference type="PDBsum" id="4DFI"/>
<dbReference type="PDBsum" id="4HZA"/>
<dbReference type="PDBsum" id="5V52"/>
<dbReference type="PDBsum" id="8X6B"/>
<dbReference type="SMR" id="Q92692"/>
<dbReference type="BioGRID" id="111777">
    <property type="interactions" value="183"/>
</dbReference>
<dbReference type="DIP" id="DIP-41043N"/>
<dbReference type="FunCoup" id="Q92692">
    <property type="interactions" value="570"/>
</dbReference>
<dbReference type="IntAct" id="Q92692">
    <property type="interactions" value="92"/>
</dbReference>
<dbReference type="MINT" id="Q92692"/>
<dbReference type="STRING" id="9606.ENSP00000252483"/>
<dbReference type="GlyConnect" id="1537">
    <property type="glycosylation" value="2 N-Linked glycans (1 site)"/>
</dbReference>
<dbReference type="GlyCosmos" id="Q92692">
    <property type="glycosylation" value="2 sites, 2 glycans"/>
</dbReference>
<dbReference type="GlyGen" id="Q92692">
    <property type="glycosylation" value="7 sites, 2 N-linked glycans (1 site), 2 O-linked glycans (5 sites)"/>
</dbReference>
<dbReference type="iPTMnet" id="Q92692"/>
<dbReference type="PhosphoSitePlus" id="Q92692"/>
<dbReference type="SwissPalm" id="Q92692"/>
<dbReference type="BioMuta" id="NECTIN2"/>
<dbReference type="DMDM" id="12643789"/>
<dbReference type="jPOST" id="Q92692"/>
<dbReference type="MassIVE" id="Q92692"/>
<dbReference type="PaxDb" id="9606-ENSP00000252483"/>
<dbReference type="PeptideAtlas" id="Q92692"/>
<dbReference type="ProteomicsDB" id="75411">
    <molecule id="Q92692-1"/>
</dbReference>
<dbReference type="ProteomicsDB" id="75412">
    <molecule id="Q92692-2"/>
</dbReference>
<dbReference type="Pumba" id="Q92692"/>
<dbReference type="ABCD" id="Q92692">
    <property type="antibodies" value="17 sequenced antibodies"/>
</dbReference>
<dbReference type="Antibodypedia" id="2425">
    <property type="antibodies" value="616 antibodies from 41 providers"/>
</dbReference>
<dbReference type="DNASU" id="5819"/>
<dbReference type="Ensembl" id="ENST00000252483.10">
    <molecule id="Q92692-1"/>
    <property type="protein sequence ID" value="ENSP00000252483.4"/>
    <property type="gene ID" value="ENSG00000130202.10"/>
</dbReference>
<dbReference type="Ensembl" id="ENST00000252485.8">
    <molecule id="Q92692-2"/>
    <property type="protein sequence ID" value="ENSP00000252485.3"/>
    <property type="gene ID" value="ENSG00000130202.10"/>
</dbReference>
<dbReference type="GeneID" id="5819"/>
<dbReference type="KEGG" id="hsa:5819"/>
<dbReference type="MANE-Select" id="ENST00000252483.10">
    <property type="protein sequence ID" value="ENSP00000252483.4"/>
    <property type="RefSeq nucleotide sequence ID" value="NM_001042724.2"/>
    <property type="RefSeq protein sequence ID" value="NP_001036189.1"/>
</dbReference>
<dbReference type="UCSC" id="uc002ozv.4">
    <molecule id="Q92692-1"/>
    <property type="organism name" value="human"/>
</dbReference>
<dbReference type="AGR" id="HGNC:9707"/>
<dbReference type="CTD" id="5819"/>
<dbReference type="DisGeNET" id="5819"/>
<dbReference type="GeneCards" id="NECTIN2"/>
<dbReference type="HGNC" id="HGNC:9707">
    <property type="gene designation" value="NECTIN2"/>
</dbReference>
<dbReference type="HPA" id="ENSG00000130202">
    <property type="expression patterns" value="Low tissue specificity"/>
</dbReference>
<dbReference type="MIM" id="600798">
    <property type="type" value="gene"/>
</dbReference>
<dbReference type="neXtProt" id="NX_Q92692"/>
<dbReference type="OpenTargets" id="ENSG00000130202"/>
<dbReference type="PharmGKB" id="PA34052"/>
<dbReference type="VEuPathDB" id="HostDB:ENSG00000130202"/>
<dbReference type="eggNOG" id="ENOG502QWSY">
    <property type="taxonomic scope" value="Eukaryota"/>
</dbReference>
<dbReference type="GeneTree" id="ENSGT00940000161167"/>
<dbReference type="HOGENOM" id="CLU_029618_0_1_1"/>
<dbReference type="InParanoid" id="Q92692"/>
<dbReference type="OMA" id="REVTWLR"/>
<dbReference type="OrthoDB" id="6413693at2759"/>
<dbReference type="PAN-GO" id="Q92692">
    <property type="GO annotations" value="17 GO annotations based on evolutionary models"/>
</dbReference>
<dbReference type="PhylomeDB" id="Q92692"/>
<dbReference type="TreeFam" id="TF331051"/>
<dbReference type="PathwayCommons" id="Q92692"/>
<dbReference type="Reactome" id="R-HSA-198933">
    <property type="pathway name" value="Immunoregulatory interactions between a Lymphoid and a non-Lymphoid cell"/>
</dbReference>
<dbReference type="Reactome" id="R-HSA-418990">
    <property type="pathway name" value="Adherens junctions interactions"/>
</dbReference>
<dbReference type="Reactome" id="R-HSA-420597">
    <property type="pathway name" value="Nectin/Necl trans heterodimerization"/>
</dbReference>
<dbReference type="SignaLink" id="Q92692"/>
<dbReference type="SIGNOR" id="Q92692"/>
<dbReference type="BioGRID-ORCS" id="5819">
    <property type="hits" value="19 hits in 1138 CRISPR screens"/>
</dbReference>
<dbReference type="ChiTaRS" id="NECTIN2">
    <property type="organism name" value="human"/>
</dbReference>
<dbReference type="EvolutionaryTrace" id="Q92692"/>
<dbReference type="GeneWiki" id="PVRL2"/>
<dbReference type="GenomeRNAi" id="5819"/>
<dbReference type="Pharos" id="Q92692">
    <property type="development level" value="Tbio"/>
</dbReference>
<dbReference type="PRO" id="PR:Q92692"/>
<dbReference type="Proteomes" id="UP000005640">
    <property type="component" value="Chromosome 19"/>
</dbReference>
<dbReference type="RNAct" id="Q92692">
    <property type="molecule type" value="protein"/>
</dbReference>
<dbReference type="Bgee" id="ENSG00000130202">
    <property type="expression patterns" value="Expressed in lower esophagus mucosa and 182 other cell types or tissues"/>
</dbReference>
<dbReference type="ExpressionAtlas" id="Q92692">
    <property type="expression patterns" value="baseline and differential"/>
</dbReference>
<dbReference type="GO" id="GO:0043296">
    <property type="term" value="C:apical junction complex"/>
    <property type="evidence" value="ECO:0000318"/>
    <property type="project" value="GO_Central"/>
</dbReference>
<dbReference type="GO" id="GO:0009986">
    <property type="term" value="C:cell surface"/>
    <property type="evidence" value="ECO:0000314"/>
    <property type="project" value="BHF-UCL"/>
</dbReference>
<dbReference type="GO" id="GO:0044291">
    <property type="term" value="C:cell-cell contact zone"/>
    <property type="evidence" value="ECO:0007669"/>
    <property type="project" value="Ensembl"/>
</dbReference>
<dbReference type="GO" id="GO:0005911">
    <property type="term" value="C:cell-cell junction"/>
    <property type="evidence" value="ECO:0000314"/>
    <property type="project" value="BHF-UCL"/>
</dbReference>
<dbReference type="GO" id="GO:0070062">
    <property type="term" value="C:extracellular exosome"/>
    <property type="evidence" value="ECO:0007005"/>
    <property type="project" value="UniProtKB"/>
</dbReference>
<dbReference type="GO" id="GO:0005925">
    <property type="term" value="C:focal adhesion"/>
    <property type="evidence" value="ECO:0007005"/>
    <property type="project" value="UniProtKB"/>
</dbReference>
<dbReference type="GO" id="GO:0016020">
    <property type="term" value="C:membrane"/>
    <property type="evidence" value="ECO:0000314"/>
    <property type="project" value="BHF-UCL"/>
</dbReference>
<dbReference type="GO" id="GO:0005886">
    <property type="term" value="C:plasma membrane"/>
    <property type="evidence" value="ECO:0000314"/>
    <property type="project" value="UniProt"/>
</dbReference>
<dbReference type="GO" id="GO:0005915">
    <property type="term" value="C:zonula adherens"/>
    <property type="evidence" value="ECO:0000250"/>
    <property type="project" value="BHF-UCL"/>
</dbReference>
<dbReference type="GO" id="GO:0050839">
    <property type="term" value="F:cell adhesion molecule binding"/>
    <property type="evidence" value="ECO:0000353"/>
    <property type="project" value="BHF-UCL"/>
</dbReference>
<dbReference type="GO" id="GO:0015026">
    <property type="term" value="F:coreceptor activity"/>
    <property type="evidence" value="ECO:0000304"/>
    <property type="project" value="ProtInc"/>
</dbReference>
<dbReference type="GO" id="GO:0042802">
    <property type="term" value="F:identical protein binding"/>
    <property type="evidence" value="ECO:0000353"/>
    <property type="project" value="IntAct"/>
</dbReference>
<dbReference type="GO" id="GO:0042803">
    <property type="term" value="F:protein homodimerization activity"/>
    <property type="evidence" value="ECO:0000353"/>
    <property type="project" value="BHF-UCL"/>
</dbReference>
<dbReference type="GO" id="GO:0048018">
    <property type="term" value="F:receptor ligand activity"/>
    <property type="evidence" value="ECO:0000314"/>
    <property type="project" value="UniProt"/>
</dbReference>
<dbReference type="GO" id="GO:0001618">
    <property type="term" value="F:virus receptor activity"/>
    <property type="evidence" value="ECO:0007669"/>
    <property type="project" value="UniProtKB-KW"/>
</dbReference>
<dbReference type="GO" id="GO:0001675">
    <property type="term" value="P:acrosome assembly"/>
    <property type="evidence" value="ECO:0000318"/>
    <property type="project" value="GO_Central"/>
</dbReference>
<dbReference type="GO" id="GO:0044406">
    <property type="term" value="P:adhesion of symbiont to host"/>
    <property type="evidence" value="ECO:0000314"/>
    <property type="project" value="BHF-UCL"/>
</dbReference>
<dbReference type="GO" id="GO:0044782">
    <property type="term" value="P:cilium organization"/>
    <property type="evidence" value="ECO:0007669"/>
    <property type="project" value="Ensembl"/>
</dbReference>
<dbReference type="GO" id="GO:0046814">
    <property type="term" value="P:coreceptor-mediated virion attachment to host cell"/>
    <property type="evidence" value="ECO:0000314"/>
    <property type="project" value="BHF-UCL"/>
</dbReference>
<dbReference type="GO" id="GO:0007010">
    <property type="term" value="P:cytoskeleton organization"/>
    <property type="evidence" value="ECO:0007669"/>
    <property type="project" value="Ensembl"/>
</dbReference>
<dbReference type="GO" id="GO:0051649">
    <property type="term" value="P:establishment of localization in cell"/>
    <property type="evidence" value="ECO:0007669"/>
    <property type="project" value="Ensembl"/>
</dbReference>
<dbReference type="GO" id="GO:0051654">
    <property type="term" value="P:establishment of mitochondrion localization"/>
    <property type="evidence" value="ECO:0007669"/>
    <property type="project" value="Ensembl"/>
</dbReference>
<dbReference type="GO" id="GO:0009566">
    <property type="term" value="P:fertilization"/>
    <property type="evidence" value="ECO:0007669"/>
    <property type="project" value="Ensembl"/>
</dbReference>
<dbReference type="GO" id="GO:0019064">
    <property type="term" value="P:fusion of virus membrane with host plasma membrane"/>
    <property type="evidence" value="ECO:0000314"/>
    <property type="project" value="BHF-UCL"/>
</dbReference>
<dbReference type="GO" id="GO:0007156">
    <property type="term" value="P:homophilic cell adhesion via plasma membrane adhesion molecules"/>
    <property type="evidence" value="ECO:0000314"/>
    <property type="project" value="BHF-UCL"/>
</dbReference>
<dbReference type="GO" id="GO:0042267">
    <property type="term" value="P:natural killer cell mediated cytotoxicity"/>
    <property type="evidence" value="ECO:0000314"/>
    <property type="project" value="UniProt"/>
</dbReference>
<dbReference type="GO" id="GO:0045953">
    <property type="term" value="P:negative regulation of natural killer cell mediated cytotoxicity"/>
    <property type="evidence" value="ECO:0000314"/>
    <property type="project" value="UniProt"/>
</dbReference>
<dbReference type="GO" id="GO:0002891">
    <property type="term" value="P:positive regulation of immunoglobulin mediated immune response"/>
    <property type="evidence" value="ECO:0000315"/>
    <property type="project" value="BHF-UCL"/>
</dbReference>
<dbReference type="GO" id="GO:0033005">
    <property type="term" value="P:positive regulation of mast cell activation"/>
    <property type="evidence" value="ECO:0000315"/>
    <property type="project" value="BHF-UCL"/>
</dbReference>
<dbReference type="GO" id="GO:0045954">
    <property type="term" value="P:positive regulation of natural killer cell mediated cytotoxicity"/>
    <property type="evidence" value="ECO:0000315"/>
    <property type="project" value="BHF-UCL"/>
</dbReference>
<dbReference type="GO" id="GO:0002860">
    <property type="term" value="P:positive regulation of natural killer cell mediated cytotoxicity directed against tumor cell target"/>
    <property type="evidence" value="ECO:0000315"/>
    <property type="project" value="BHF-UCL"/>
</dbReference>
<dbReference type="GO" id="GO:0050862">
    <property type="term" value="P:positive regulation of T cell receptor signaling pathway"/>
    <property type="evidence" value="ECO:0000314"/>
    <property type="project" value="UniProtKB"/>
</dbReference>
<dbReference type="GO" id="GO:0046596">
    <property type="term" value="P:regulation of viral entry into host cell"/>
    <property type="evidence" value="ECO:0000314"/>
    <property type="project" value="CACAO"/>
</dbReference>
<dbReference type="GO" id="GO:0030382">
    <property type="term" value="P:sperm mitochondrion organization"/>
    <property type="evidence" value="ECO:0007669"/>
    <property type="project" value="Ensembl"/>
</dbReference>
<dbReference type="GO" id="GO:0007286">
    <property type="term" value="P:spermatid development"/>
    <property type="evidence" value="ECO:0000250"/>
    <property type="project" value="BHF-UCL"/>
</dbReference>
<dbReference type="GO" id="GO:0007289">
    <property type="term" value="P:spermatid nucleus differentiation"/>
    <property type="evidence" value="ECO:0007669"/>
    <property type="project" value="Ensembl"/>
</dbReference>
<dbReference type="GO" id="GO:0042271">
    <property type="term" value="P:susceptibility to natural killer cell mediated cytotoxicity"/>
    <property type="evidence" value="ECO:0000315"/>
    <property type="project" value="BHF-UCL"/>
</dbReference>
<dbReference type="GO" id="GO:0060370">
    <property type="term" value="P:susceptibility to T cell mediated cytotoxicity"/>
    <property type="evidence" value="ECO:0000314"/>
    <property type="project" value="BHF-UCL"/>
</dbReference>
<dbReference type="CDD" id="cd20930">
    <property type="entry name" value="Ig3_Nectin-5_like"/>
    <property type="match status" value="1"/>
</dbReference>
<dbReference type="CDD" id="cd07703">
    <property type="entry name" value="IgC1_2_Nectin-2_Necl-5_like"/>
    <property type="match status" value="1"/>
</dbReference>
<dbReference type="CDD" id="cd20989">
    <property type="entry name" value="IgV_1_Nectin-2_NecL-5_like_CD112_CD155"/>
    <property type="match status" value="1"/>
</dbReference>
<dbReference type="FunFam" id="2.60.40.10:FF:000619">
    <property type="entry name" value="Nectin cell adhesion molecule 2"/>
    <property type="match status" value="1"/>
</dbReference>
<dbReference type="FunFam" id="2.60.40.10:FF:000711">
    <property type="entry name" value="Nectin cell adhesion molecule 2"/>
    <property type="match status" value="1"/>
</dbReference>
<dbReference type="FunFam" id="2.60.40.10:FF:000712">
    <property type="entry name" value="Poliovirus receptor homolog"/>
    <property type="match status" value="1"/>
</dbReference>
<dbReference type="Gene3D" id="2.60.40.10">
    <property type="entry name" value="Immunoglobulins"/>
    <property type="match status" value="3"/>
</dbReference>
<dbReference type="InterPro" id="IPR013162">
    <property type="entry name" value="CD80_C2-set"/>
</dbReference>
<dbReference type="InterPro" id="IPR007110">
    <property type="entry name" value="Ig-like_dom"/>
</dbReference>
<dbReference type="InterPro" id="IPR036179">
    <property type="entry name" value="Ig-like_dom_sf"/>
</dbReference>
<dbReference type="InterPro" id="IPR013783">
    <property type="entry name" value="Ig-like_fold"/>
</dbReference>
<dbReference type="InterPro" id="IPR003599">
    <property type="entry name" value="Ig_sub"/>
</dbReference>
<dbReference type="InterPro" id="IPR013106">
    <property type="entry name" value="Ig_V-set"/>
</dbReference>
<dbReference type="InterPro" id="IPR052659">
    <property type="entry name" value="Nectin/PVR"/>
</dbReference>
<dbReference type="PANTHER" id="PTHR47387">
    <property type="entry name" value="NECTIN-2"/>
    <property type="match status" value="1"/>
</dbReference>
<dbReference type="PANTHER" id="PTHR47387:SF1">
    <property type="entry name" value="NECTIN-2"/>
    <property type="match status" value="1"/>
</dbReference>
<dbReference type="Pfam" id="PF08205">
    <property type="entry name" value="C2-set_2"/>
    <property type="match status" value="1"/>
</dbReference>
<dbReference type="Pfam" id="PF07686">
    <property type="entry name" value="V-set"/>
    <property type="match status" value="1"/>
</dbReference>
<dbReference type="SMART" id="SM00409">
    <property type="entry name" value="IG"/>
    <property type="match status" value="2"/>
</dbReference>
<dbReference type="SMART" id="SM00406">
    <property type="entry name" value="IGv"/>
    <property type="match status" value="1"/>
</dbReference>
<dbReference type="SUPFAM" id="SSF48726">
    <property type="entry name" value="Immunoglobulin"/>
    <property type="match status" value="3"/>
</dbReference>
<dbReference type="PROSITE" id="PS50835">
    <property type="entry name" value="IG_LIKE"/>
    <property type="match status" value="3"/>
</dbReference>
<keyword id="KW-0002">3D-structure</keyword>
<keyword id="KW-0025">Alternative splicing</keyword>
<keyword id="KW-0130">Cell adhesion</keyword>
<keyword id="KW-1003">Cell membrane</keyword>
<keyword id="KW-1015">Disulfide bond</keyword>
<keyword id="KW-0325">Glycoprotein</keyword>
<keyword id="KW-1183">Host cell receptor for virus entry</keyword>
<keyword id="KW-0945">Host-virus interaction</keyword>
<keyword id="KW-0393">Immunoglobulin domain</keyword>
<keyword id="KW-0472">Membrane</keyword>
<keyword id="KW-0597">Phosphoprotein</keyword>
<keyword id="KW-1267">Proteomics identification</keyword>
<keyword id="KW-0675">Receptor</keyword>
<keyword id="KW-1185">Reference proteome</keyword>
<keyword id="KW-0677">Repeat</keyword>
<keyword id="KW-0732">Signal</keyword>
<keyword id="KW-0812">Transmembrane</keyword>
<keyword id="KW-1133">Transmembrane helix</keyword>
<name>NECT2_HUMAN</name>
<reference key="1">
    <citation type="journal article" date="1995" name="Gene">
        <title>The human PRR2 gene, related to the human poliovirus receptor gene (PVR), is the true homolog of the murine MPH gene.</title>
        <authorList>
            <person name="Eberle F."/>
            <person name="Dubreuil P."/>
            <person name="Mattei M.-G."/>
            <person name="Devilard E."/>
            <person name="Lopez M."/>
        </authorList>
    </citation>
    <scope>NUCLEOTIDE SEQUENCE [MRNA] (ISOFORM DELTA)</scope>
</reference>
<reference key="2">
    <citation type="journal article" date="1998" name="Virology">
        <title>A cell surface protein with herpesvirus entry activity (HveB) confers susceptibility to infection by mutants of herpes simplex virus type 1, herpes simplex virus type 2, and pseudorabies virus.</title>
        <authorList>
            <person name="Warner M.S."/>
            <person name="Geraghty R.J."/>
            <person name="Martinez W.M."/>
            <person name="Montgomery R.I."/>
            <person name="Whitbeck J.C."/>
            <person name="Xu R."/>
            <person name="Eisenberg R.J."/>
            <person name="Cohen G.H."/>
            <person name="Spear P.G."/>
        </authorList>
    </citation>
    <scope>NUCLEOTIDE SEQUENCE [MRNA] (ISOFORM ALPHA)</scope>
    <scope>FUNCTION (MICROBIAL INFECTION)</scope>
    <scope>INTERACTION WITH HUMAN HERPESVIRUS 1/HHV-1; HUMAN HERPESVIRUS 2/HHV-2 ABD PSEUDORABIES VIRUS GLYCOPROTEIN D</scope>
</reference>
<reference key="3">
    <citation type="journal article" date="2004" name="Nat. Genet.">
        <title>Complete sequencing and characterization of 21,243 full-length human cDNAs.</title>
        <authorList>
            <person name="Ota T."/>
            <person name="Suzuki Y."/>
            <person name="Nishikawa T."/>
            <person name="Otsuki T."/>
            <person name="Sugiyama T."/>
            <person name="Irie R."/>
            <person name="Wakamatsu A."/>
            <person name="Hayashi K."/>
            <person name="Sato H."/>
            <person name="Nagai K."/>
            <person name="Kimura K."/>
            <person name="Makita H."/>
            <person name="Sekine M."/>
            <person name="Obayashi M."/>
            <person name="Nishi T."/>
            <person name="Shibahara T."/>
            <person name="Tanaka T."/>
            <person name="Ishii S."/>
            <person name="Yamamoto J."/>
            <person name="Saito K."/>
            <person name="Kawai Y."/>
            <person name="Isono Y."/>
            <person name="Nakamura Y."/>
            <person name="Nagahari K."/>
            <person name="Murakami K."/>
            <person name="Yasuda T."/>
            <person name="Iwayanagi T."/>
            <person name="Wagatsuma M."/>
            <person name="Shiratori A."/>
            <person name="Sudo H."/>
            <person name="Hosoiri T."/>
            <person name="Kaku Y."/>
            <person name="Kodaira H."/>
            <person name="Kondo H."/>
            <person name="Sugawara M."/>
            <person name="Takahashi M."/>
            <person name="Kanda K."/>
            <person name="Yokoi T."/>
            <person name="Furuya T."/>
            <person name="Kikkawa E."/>
            <person name="Omura Y."/>
            <person name="Abe K."/>
            <person name="Kamihara K."/>
            <person name="Katsuta N."/>
            <person name="Sato K."/>
            <person name="Tanikawa M."/>
            <person name="Yamazaki M."/>
            <person name="Ninomiya K."/>
            <person name="Ishibashi T."/>
            <person name="Yamashita H."/>
            <person name="Murakawa K."/>
            <person name="Fujimori K."/>
            <person name="Tanai H."/>
            <person name="Kimata M."/>
            <person name="Watanabe M."/>
            <person name="Hiraoka S."/>
            <person name="Chiba Y."/>
            <person name="Ishida S."/>
            <person name="Ono Y."/>
            <person name="Takiguchi S."/>
            <person name="Watanabe S."/>
            <person name="Yosida M."/>
            <person name="Hotuta T."/>
            <person name="Kusano J."/>
            <person name="Kanehori K."/>
            <person name="Takahashi-Fujii A."/>
            <person name="Hara H."/>
            <person name="Tanase T.-O."/>
            <person name="Nomura Y."/>
            <person name="Togiya S."/>
            <person name="Komai F."/>
            <person name="Hara R."/>
            <person name="Takeuchi K."/>
            <person name="Arita M."/>
            <person name="Imose N."/>
            <person name="Musashino K."/>
            <person name="Yuuki H."/>
            <person name="Oshima A."/>
            <person name="Sasaki N."/>
            <person name="Aotsuka S."/>
            <person name="Yoshikawa Y."/>
            <person name="Matsunawa H."/>
            <person name="Ichihara T."/>
            <person name="Shiohata N."/>
            <person name="Sano S."/>
            <person name="Moriya S."/>
            <person name="Momiyama H."/>
            <person name="Satoh N."/>
            <person name="Takami S."/>
            <person name="Terashima Y."/>
            <person name="Suzuki O."/>
            <person name="Nakagawa S."/>
            <person name="Senoh A."/>
            <person name="Mizoguchi H."/>
            <person name="Goto Y."/>
            <person name="Shimizu F."/>
            <person name="Wakebe H."/>
            <person name="Hishigaki H."/>
            <person name="Watanabe T."/>
            <person name="Sugiyama A."/>
            <person name="Takemoto M."/>
            <person name="Kawakami B."/>
            <person name="Yamazaki M."/>
            <person name="Watanabe K."/>
            <person name="Kumagai A."/>
            <person name="Itakura S."/>
            <person name="Fukuzumi Y."/>
            <person name="Fujimori Y."/>
            <person name="Komiyama M."/>
            <person name="Tashiro H."/>
            <person name="Tanigami A."/>
            <person name="Fujiwara T."/>
            <person name="Ono T."/>
            <person name="Yamada K."/>
            <person name="Fujii Y."/>
            <person name="Ozaki K."/>
            <person name="Hirao M."/>
            <person name="Ohmori Y."/>
            <person name="Kawabata A."/>
            <person name="Hikiji T."/>
            <person name="Kobatake N."/>
            <person name="Inagaki H."/>
            <person name="Ikema Y."/>
            <person name="Okamoto S."/>
            <person name="Okitani R."/>
            <person name="Kawakami T."/>
            <person name="Noguchi S."/>
            <person name="Itoh T."/>
            <person name="Shigeta K."/>
            <person name="Senba T."/>
            <person name="Matsumura K."/>
            <person name="Nakajima Y."/>
            <person name="Mizuno T."/>
            <person name="Morinaga M."/>
            <person name="Sasaki M."/>
            <person name="Togashi T."/>
            <person name="Oyama M."/>
            <person name="Hata H."/>
            <person name="Watanabe M."/>
            <person name="Komatsu T."/>
            <person name="Mizushima-Sugano J."/>
            <person name="Satoh T."/>
            <person name="Shirai Y."/>
            <person name="Takahashi Y."/>
            <person name="Nakagawa K."/>
            <person name="Okumura K."/>
            <person name="Nagase T."/>
            <person name="Nomura N."/>
            <person name="Kikuchi H."/>
            <person name="Masuho Y."/>
            <person name="Yamashita R."/>
            <person name="Nakai K."/>
            <person name="Yada T."/>
            <person name="Nakamura Y."/>
            <person name="Ohara O."/>
            <person name="Isogai T."/>
            <person name="Sugano S."/>
        </authorList>
    </citation>
    <scope>NUCLEOTIDE SEQUENCE [LARGE SCALE MRNA] (ISOFORM ALPHA)</scope>
    <source>
        <tissue>Tongue</tissue>
    </source>
</reference>
<reference key="4">
    <citation type="submission" date="2004-06" db="EMBL/GenBank/DDBJ databases">
        <title>Cloning of human full open reading frames in Gateway(TM) system entry vector (pDONR201).</title>
        <authorList>
            <person name="Ebert L."/>
            <person name="Schick M."/>
            <person name="Neubert P."/>
            <person name="Schatten R."/>
            <person name="Henze S."/>
            <person name="Korn B."/>
        </authorList>
    </citation>
    <scope>NUCLEOTIDE SEQUENCE [LARGE SCALE MRNA] (ISOFORM ALPHA)</scope>
</reference>
<reference key="5">
    <citation type="submission" date="2005-07" db="EMBL/GenBank/DDBJ databases">
        <authorList>
            <person name="Mural R.J."/>
            <person name="Istrail S."/>
            <person name="Sutton G.G."/>
            <person name="Florea L."/>
            <person name="Halpern A.L."/>
            <person name="Mobarry C.M."/>
            <person name="Lippert R."/>
            <person name="Walenz B."/>
            <person name="Shatkay H."/>
            <person name="Dew I."/>
            <person name="Miller J.R."/>
            <person name="Flanigan M.J."/>
            <person name="Edwards N.J."/>
            <person name="Bolanos R."/>
            <person name="Fasulo D."/>
            <person name="Halldorsson B.V."/>
            <person name="Hannenhalli S."/>
            <person name="Turner R."/>
            <person name="Yooseph S."/>
            <person name="Lu F."/>
            <person name="Nusskern D.R."/>
            <person name="Shue B.C."/>
            <person name="Zheng X.H."/>
            <person name="Zhong F."/>
            <person name="Delcher A.L."/>
            <person name="Huson D.H."/>
            <person name="Kravitz S.A."/>
            <person name="Mouchard L."/>
            <person name="Reinert K."/>
            <person name="Remington K.A."/>
            <person name="Clark A.G."/>
            <person name="Waterman M.S."/>
            <person name="Eichler E.E."/>
            <person name="Adams M.D."/>
            <person name="Hunkapiller M.W."/>
            <person name="Myers E.W."/>
            <person name="Venter J.C."/>
        </authorList>
    </citation>
    <scope>NUCLEOTIDE SEQUENCE [LARGE SCALE GENOMIC DNA]</scope>
</reference>
<reference key="6">
    <citation type="journal article" date="2004" name="Genome Res.">
        <title>The status, quality, and expansion of the NIH full-length cDNA project: the Mammalian Gene Collection (MGC).</title>
        <authorList>
            <consortium name="The MGC Project Team"/>
        </authorList>
    </citation>
    <scope>NUCLEOTIDE SEQUENCE [LARGE SCALE MRNA] (ISOFORM ALPHA)</scope>
    <source>
        <tissue>Brain</tissue>
    </source>
</reference>
<reference key="7">
    <citation type="submission" date="1998-01" db="EMBL/GenBank/DDBJ databases">
        <title>A transcriptional map in the region of 19q13 derived using direct sequencing and exon trapping.</title>
        <authorList>
            <person name="Yoshiura K."/>
            <person name="Murray J.C."/>
        </authorList>
    </citation>
    <scope>NUCLEOTIDE SEQUENCE [GENOMIC DNA] OF 31-538</scope>
</reference>
<reference key="8">
    <citation type="journal article" date="1998" name="DNA Seq.">
        <title>Sequencing of 42kb of the APO E-C2 gene cluster reveals a new gene: PEREC1.</title>
        <authorList>
            <person name="Freitas E.M."/>
            <person name="Zhang W.J."/>
            <person name="Lalonde J.P."/>
            <person name="Tay G.K."/>
            <person name="Gaudieri S."/>
            <person name="Ashworth L.K."/>
            <person name="Van Bockxmeer F.M."/>
            <person name="Dawkins R.L."/>
        </authorList>
    </citation>
    <scope>NUCLEOTIDE SEQUENCE [GENOMIC DNA] OF 449-538</scope>
</reference>
<reference key="9">
    <citation type="journal article" date="2001" name="J. Virol.">
        <title>Structural features of nectin-2 (HveB) required for herpes simplex virus entry.</title>
        <authorList>
            <person name="Martinez W.M."/>
            <person name="Spear P.G."/>
        </authorList>
    </citation>
    <scope>FUNCTION (MICROBIAL INFECTION)</scope>
    <scope>INTERACTION WITH HHV-1 MUTANT RID1; HHV-2 AND PRV GLYCOPROTEIN D</scope>
    <scope>MUTAGENESIS OF MET-89</scope>
</reference>
<reference key="10">
    <citation type="journal article" date="2005" name="Mol. Immunol.">
        <title>PVR (CD155) and Nectin-2 (CD112) as ligands of the human DNAM-1 (CD226) activating receptor: involvement in tumor cell lysis.</title>
        <authorList>
            <person name="Pende D."/>
            <person name="Bottino C."/>
            <person name="Castriconi R."/>
            <person name="Cantoni C."/>
            <person name="Marcenaro S."/>
            <person name="Rivera P."/>
            <person name="Spaggiari G.M."/>
            <person name="Dondero A."/>
            <person name="Carnemolla B."/>
            <person name="Reymond N."/>
            <person name="Mingari M.C."/>
            <person name="Lopez M."/>
            <person name="Moretta L."/>
            <person name="Moretta A."/>
        </authorList>
    </citation>
    <scope>INTERACTION WITH CD226</scope>
</reference>
<reference key="11">
    <citation type="journal article" date="2006" name="Cell">
        <title>Global, in vivo, and site-specific phosphorylation dynamics in signaling networks.</title>
        <authorList>
            <person name="Olsen J.V."/>
            <person name="Blagoev B."/>
            <person name="Gnad F."/>
            <person name="Macek B."/>
            <person name="Kumar C."/>
            <person name="Mortensen P."/>
            <person name="Mann M."/>
        </authorList>
    </citation>
    <scope>PHOSPHORYLATION [LARGE SCALE ANALYSIS] AT SER-433</scope>
    <scope>IDENTIFICATION BY MASS SPECTROMETRY [LARGE SCALE ANALYSIS]</scope>
    <source>
        <tissue>Cervix carcinoma</tissue>
    </source>
</reference>
<reference key="12">
    <citation type="journal article" date="2009" name="Anal. Chem.">
        <title>Lys-N and trypsin cover complementary parts of the phosphoproteome in a refined SCX-based approach.</title>
        <authorList>
            <person name="Gauci S."/>
            <person name="Helbig A.O."/>
            <person name="Slijper M."/>
            <person name="Krijgsveld J."/>
            <person name="Heck A.J."/>
            <person name="Mohammed S."/>
        </authorList>
    </citation>
    <scope>IDENTIFICATION BY MASS SPECTROMETRY [LARGE SCALE ANALYSIS]</scope>
</reference>
<reference key="13">
    <citation type="journal article" date="2009" name="Nat. Immunol.">
        <title>The surface protein TIGIT suppresses T cell activation by promoting the generation of mature immunoregulatory dendritic cells.</title>
        <authorList>
            <person name="Yu X."/>
            <person name="Harden K."/>
            <person name="Gonzalez L.C."/>
            <person name="Francesco M."/>
            <person name="Chiang E."/>
            <person name="Irving B."/>
            <person name="Tom I."/>
            <person name="Ivelja S."/>
            <person name="Refino C.J."/>
            <person name="Clark H."/>
            <person name="Eaton D."/>
            <person name="Grogan J.L."/>
        </authorList>
    </citation>
    <scope>INTERACTION WITH TIGIT</scope>
</reference>
<reference key="14">
    <citation type="journal article" date="2010" name="Sci. Signal.">
        <title>Quantitative phosphoproteomics reveals widespread full phosphorylation site occupancy during mitosis.</title>
        <authorList>
            <person name="Olsen J.V."/>
            <person name="Vermeulen M."/>
            <person name="Santamaria A."/>
            <person name="Kumar C."/>
            <person name="Miller M.L."/>
            <person name="Jensen L.J."/>
            <person name="Gnad F."/>
            <person name="Cox J."/>
            <person name="Jensen T.S."/>
            <person name="Nigg E.A."/>
            <person name="Brunak S."/>
            <person name="Mann M."/>
        </authorList>
    </citation>
    <scope>PHOSPHORYLATION [LARGE SCALE ANALYSIS] AT SER-433</scope>
    <scope>IDENTIFICATION BY MASS SPECTROMETRY [LARGE SCALE ANALYSIS]</scope>
    <source>
        <tissue>Cervix carcinoma</tissue>
    </source>
</reference>
<reference key="15">
    <citation type="journal article" date="2013" name="J. Proteome Res.">
        <title>Toward a comprehensive characterization of a human cancer cell phosphoproteome.</title>
        <authorList>
            <person name="Zhou H."/>
            <person name="Di Palma S."/>
            <person name="Preisinger C."/>
            <person name="Peng M."/>
            <person name="Polat A.N."/>
            <person name="Heck A.J."/>
            <person name="Mohammed S."/>
        </authorList>
    </citation>
    <scope>PHOSPHORYLATION [LARGE SCALE ANALYSIS] AT SER-433</scope>
    <scope>IDENTIFICATION BY MASS SPECTROMETRY [LARGE SCALE ANALYSIS]</scope>
    <source>
        <tissue>Cervix carcinoma</tissue>
        <tissue>Erythroleukemia</tissue>
    </source>
</reference>
<reference key="16">
    <citation type="journal article" date="2014" name="J. Proteomics">
        <title>An enzyme assisted RP-RPLC approach for in-depth analysis of human liver phosphoproteome.</title>
        <authorList>
            <person name="Bian Y."/>
            <person name="Song C."/>
            <person name="Cheng K."/>
            <person name="Dong M."/>
            <person name="Wang F."/>
            <person name="Huang J."/>
            <person name="Sun D."/>
            <person name="Wang L."/>
            <person name="Ye M."/>
            <person name="Zou H."/>
        </authorList>
    </citation>
    <scope>PHOSPHORYLATION [LARGE SCALE ANALYSIS] AT THR-410</scope>
    <scope>PHOSPHORYLATION [LARGE SCALE ANALYSIS] AT SER-465 AND SER-470 (ISOFORM ALPHA)</scope>
    <scope>IDENTIFICATION BY MASS SPECTROMETRY [LARGE SCALE ANALYSIS]</scope>
    <source>
        <tissue>Liver</tissue>
    </source>
</reference>
<reference key="17">
    <citation type="journal article" date="2016" name="J. Exp. Med.">
        <title>Identification of CD112R as a novel checkpoint for human T cells.</title>
        <authorList>
            <person name="Zhu Y."/>
            <person name="Paniccia A."/>
            <person name="Schulick A.C."/>
            <person name="Chen W."/>
            <person name="Koenig M.R."/>
            <person name="Byers J.T."/>
            <person name="Yao S."/>
            <person name="Bevers S."/>
            <person name="Edil B.H."/>
        </authorList>
    </citation>
    <scope>FUNCTION AS PVRIG LIGAND</scope>
</reference>
<reference key="18">
    <citation type="journal article" date="2012" name="Proc. Natl. Acad. Sci. U.S.A.">
        <title>Structure of Nectin-2 reveals determinants of homophilic and heterophilic interactions that control cell-cell adhesion.</title>
        <authorList>
            <person name="Samanta D."/>
            <person name="Ramagopal U.A."/>
            <person name="Rubinstein R."/>
            <person name="Vigdorovich V."/>
            <person name="Nathenson S.G."/>
            <person name="Almo S.C."/>
        </authorList>
    </citation>
    <scope>X-RAY CRYSTALLOGRAPHY (1.3 ANGSTROMS) OF 32-158</scope>
    <scope>SUBUNIT</scope>
    <scope>DISULFIDE BOND</scope>
    <scope>MUTAGENESIS OF ASN-81</scope>
</reference>
<proteinExistence type="evidence at protein level"/>
<evidence type="ECO:0000250" key="1"/>
<evidence type="ECO:0000255" key="2"/>
<evidence type="ECO:0000255" key="3">
    <source>
        <dbReference type="PROSITE-ProRule" id="PRU00114"/>
    </source>
</evidence>
<evidence type="ECO:0000256" key="4">
    <source>
        <dbReference type="SAM" id="MobiDB-lite"/>
    </source>
</evidence>
<evidence type="ECO:0000269" key="5">
    <source>
    </source>
</evidence>
<evidence type="ECO:0000269" key="6">
    <source>
    </source>
</evidence>
<evidence type="ECO:0000269" key="7">
    <source>
    </source>
</evidence>
<evidence type="ECO:0000269" key="8">
    <source>
    </source>
</evidence>
<evidence type="ECO:0000269" key="9">
    <source>
    </source>
</evidence>
<evidence type="ECO:0000269" key="10">
    <source>
    </source>
</evidence>
<evidence type="ECO:0000303" key="11">
    <source>
    </source>
</evidence>
<evidence type="ECO:0000303" key="12">
    <source>
    </source>
</evidence>
<evidence type="ECO:0000303" key="13">
    <source>
    </source>
</evidence>
<evidence type="ECO:0000303" key="14">
    <source ref="4"/>
</evidence>
<evidence type="ECO:0000305" key="15"/>
<evidence type="ECO:0000312" key="16">
    <source>
        <dbReference type="HGNC" id="HGNC:9707"/>
    </source>
</evidence>
<evidence type="ECO:0007744" key="17">
    <source>
    </source>
</evidence>
<evidence type="ECO:0007744" key="18">
    <source>
    </source>
</evidence>
<evidence type="ECO:0007744" key="19">
    <source>
    </source>
</evidence>
<evidence type="ECO:0007744" key="20">
    <source>
    </source>
</evidence>
<evidence type="ECO:0007829" key="21">
    <source>
        <dbReference type="PDB" id="3R0N"/>
    </source>
</evidence>
<evidence type="ECO:0007829" key="22">
    <source>
        <dbReference type="PDB" id="4DFH"/>
    </source>
</evidence>
<evidence type="ECO:0007829" key="23">
    <source>
        <dbReference type="PDB" id="5V52"/>
    </source>
</evidence>
<accession>Q92692</accession>
<accession>A8K5L5</accession>
<accession>O75455</accession>
<accession>Q6IBI6</accession>
<accession>Q96J29</accession>
<feature type="signal peptide" evidence="2">
    <location>
        <begin position="1"/>
        <end position="31"/>
    </location>
</feature>
<feature type="chain" id="PRO_0000015136" description="Nectin-2">
    <location>
        <begin position="32"/>
        <end position="538"/>
    </location>
</feature>
<feature type="topological domain" description="Extracellular" evidence="2">
    <location>
        <begin position="32"/>
        <end position="360"/>
    </location>
</feature>
<feature type="transmembrane region" description="Helical" evidence="2">
    <location>
        <begin position="361"/>
        <end position="381"/>
    </location>
</feature>
<feature type="topological domain" description="Cytoplasmic" evidence="2">
    <location>
        <begin position="382"/>
        <end position="538"/>
    </location>
</feature>
<feature type="domain" description="Ig-like V-type">
    <location>
        <begin position="32"/>
        <end position="156"/>
    </location>
</feature>
<feature type="domain" description="Ig-like C2-type 1">
    <location>
        <begin position="162"/>
        <end position="256"/>
    </location>
</feature>
<feature type="domain" description="Ig-like C2-type 2">
    <location>
        <begin position="261"/>
        <end position="345"/>
    </location>
</feature>
<feature type="region of interest" description="Disordered" evidence="4">
    <location>
        <begin position="390"/>
        <end position="414"/>
    </location>
</feature>
<feature type="region of interest" description="Disordered" evidence="4">
    <location>
        <begin position="462"/>
        <end position="489"/>
    </location>
</feature>
<feature type="modified residue" description="Phosphothreonine" evidence="20">
    <location>
        <position position="410"/>
    </location>
</feature>
<feature type="modified residue" description="Phosphoserine" evidence="17 18 19">
    <location>
        <position position="433"/>
    </location>
</feature>
<feature type="glycosylation site" description="N-linked (GlcNAc...) asparagine" evidence="2">
    <location>
        <position position="137"/>
    </location>
</feature>
<feature type="glycosylation site" description="N-linked (GlcNAc...) asparagine" evidence="2">
    <location>
        <position position="324"/>
    </location>
</feature>
<feature type="disulfide bond" evidence="3 8">
    <location>
        <begin position="54"/>
        <end position="140"/>
    </location>
</feature>
<feature type="disulfide bond" evidence="3">
    <location>
        <begin position="183"/>
        <end position="238"/>
    </location>
</feature>
<feature type="disulfide bond" evidence="3">
    <location>
        <begin position="283"/>
        <end position="329"/>
    </location>
</feature>
<feature type="splice variant" id="VSP_002628" description="In isoform Alpha." evidence="11 12 13 14">
    <original>NTAGAGATGGIIGGIIAAIIATAVAATGILICRQQRKEQTLQGAEEDEDLEGPPSYKPPTPKAKLEAQEMPSQLFTLGASEHSPLKTPYFDAGASCTEQEMPRYHELPTLEERSGPLHPGATSLGSPIP</original>
    <variation>RASPRDVGPLVWGAVGGTLLVLLLLAGGSLAFILLRVRRRRKSPGGAGGGASGDGGFYDPKAQVLGNGDPVFWTPVVPGPMEPDGKDEEEEEEEEKAEKGLMLPPPPALEDDMESQLDGSLISRRAVYV</variation>
    <location>
        <begin position="351"/>
        <end position="479"/>
    </location>
</feature>
<feature type="splice variant" id="VSP_002629" description="In isoform Alpha." evidence="11 12 13 14">
    <location>
        <begin position="480"/>
        <end position="538"/>
    </location>
</feature>
<feature type="mutagenesis site" description="Abolishes homodimerization." evidence="8">
    <original>N</original>
    <variation>A</variation>
    <location>
        <position position="81"/>
    </location>
</feature>
<feature type="mutagenesis site" description="Loss of entry of HHV-1/Rid1 and HSV-2. No effect on PRV entry." evidence="5">
    <original>M</original>
    <variation>F</variation>
    <location>
        <position position="89"/>
    </location>
</feature>
<feature type="mutagenesis site" description="Increased entry of HHV-1/Rid1 and HSV-2." evidence="5">
    <original>M</original>
    <variation>I</variation>
    <location>
        <position position="89"/>
    </location>
</feature>
<feature type="strand" evidence="21">
    <location>
        <begin position="35"/>
        <end position="37"/>
    </location>
</feature>
<feature type="strand" evidence="21">
    <location>
        <begin position="40"/>
        <end position="43"/>
    </location>
</feature>
<feature type="strand" evidence="21">
    <location>
        <begin position="50"/>
        <end position="52"/>
    </location>
</feature>
<feature type="strand" evidence="21">
    <location>
        <begin position="55"/>
        <end position="58"/>
    </location>
</feature>
<feature type="strand" evidence="21">
    <location>
        <begin position="64"/>
        <end position="71"/>
    </location>
</feature>
<feature type="strand" evidence="23">
    <location>
        <begin position="73"/>
        <end position="75"/>
    </location>
</feature>
<feature type="helix" evidence="21">
    <location>
        <begin position="77"/>
        <end position="79"/>
    </location>
</feature>
<feature type="strand" evidence="21">
    <location>
        <begin position="81"/>
        <end position="86"/>
    </location>
</feature>
<feature type="turn" evidence="21">
    <location>
        <begin position="87"/>
        <end position="89"/>
    </location>
</feature>
<feature type="strand" evidence="21">
    <location>
        <begin position="90"/>
        <end position="92"/>
    </location>
</feature>
<feature type="strand" evidence="21">
    <location>
        <begin position="95"/>
        <end position="98"/>
    </location>
</feature>
<feature type="helix" evidence="21">
    <location>
        <begin position="100"/>
        <end position="102"/>
    </location>
</feature>
<feature type="strand" evidence="21">
    <location>
        <begin position="103"/>
        <end position="107"/>
    </location>
</feature>
<feature type="turn" evidence="22">
    <location>
        <begin position="113"/>
        <end position="115"/>
    </location>
</feature>
<feature type="strand" evidence="21">
    <location>
        <begin position="125"/>
        <end position="127"/>
    </location>
</feature>
<feature type="helix" evidence="21">
    <location>
        <begin position="132"/>
        <end position="134"/>
    </location>
</feature>
<feature type="strand" evidence="21">
    <location>
        <begin position="136"/>
        <end position="145"/>
    </location>
</feature>
<feature type="strand" evidence="21">
    <location>
        <begin position="148"/>
        <end position="157"/>
    </location>
</feature>
<feature type="modified residue" description="Phosphoserine" evidence="20">
    <location sequence="Q92692-2">
        <position position="465"/>
    </location>
</feature>
<feature type="modified residue" description="Phosphoserine" evidence="20">
    <location sequence="Q92692-2">
        <position position="470"/>
    </location>
</feature>
<feature type="sequence conflict" description="In Ref. 3; BAF84019." evidence="15" ref="3">
    <original>P</original>
    <variation>L</variation>
    <location sequence="Q92692-2">
        <position position="410"/>
    </location>
</feature>